<organism>
    <name type="scientific">Pyrobaculum calidifontis (strain DSM 21063 / JCM 11548 / VA1)</name>
    <dbReference type="NCBI Taxonomy" id="410359"/>
    <lineage>
        <taxon>Archaea</taxon>
        <taxon>Thermoproteota</taxon>
        <taxon>Thermoprotei</taxon>
        <taxon>Thermoproteales</taxon>
        <taxon>Thermoproteaceae</taxon>
        <taxon>Pyrobaculum</taxon>
    </lineage>
</organism>
<sequence>MSYRRETRETLVVVELVPGAVAQVETPIPFLTHMVETFLFYAGLGGRVYAEEKRRLDDGHHVIEDVAIALGRALDQLIGDRSAVARYGWAAVPMDDAFALAAVDLGGRPYWVVKAKLPNVAIGGYPLPMFPHWVRSLASEARATIHIYARGRDPHHKVEAAHKALGLALRAAVSPASGVQSTKGVLK</sequence>
<gene>
    <name evidence="1" type="primary">hisB</name>
    <name type="ordered locus">Pcal_0139</name>
</gene>
<feature type="chain" id="PRO_1000010337" description="Imidazoleglycerol-phosphate dehydratase">
    <location>
        <begin position="1"/>
        <end position="187"/>
    </location>
</feature>
<name>HIS7_PYRCJ</name>
<comment type="catalytic activity">
    <reaction evidence="1">
        <text>D-erythro-1-(imidazol-4-yl)glycerol 3-phosphate = 3-(imidazol-4-yl)-2-oxopropyl phosphate + H2O</text>
        <dbReference type="Rhea" id="RHEA:11040"/>
        <dbReference type="ChEBI" id="CHEBI:15377"/>
        <dbReference type="ChEBI" id="CHEBI:57766"/>
        <dbReference type="ChEBI" id="CHEBI:58278"/>
        <dbReference type="EC" id="4.2.1.19"/>
    </reaction>
</comment>
<comment type="pathway">
    <text evidence="1">Amino-acid biosynthesis; L-histidine biosynthesis; L-histidine from 5-phospho-alpha-D-ribose 1-diphosphate: step 6/9.</text>
</comment>
<comment type="subcellular location">
    <subcellularLocation>
        <location evidence="1">Cytoplasm</location>
    </subcellularLocation>
</comment>
<comment type="similarity">
    <text evidence="1">Belongs to the imidazoleglycerol-phosphate dehydratase family.</text>
</comment>
<proteinExistence type="inferred from homology"/>
<accession>A3MSG0</accession>
<evidence type="ECO:0000255" key="1">
    <source>
        <dbReference type="HAMAP-Rule" id="MF_00076"/>
    </source>
</evidence>
<keyword id="KW-0028">Amino-acid biosynthesis</keyword>
<keyword id="KW-0963">Cytoplasm</keyword>
<keyword id="KW-0368">Histidine biosynthesis</keyword>
<keyword id="KW-0456">Lyase</keyword>
<reference key="1">
    <citation type="submission" date="2007-02" db="EMBL/GenBank/DDBJ databases">
        <title>Complete sequence of Pyrobaculum calidifontis JCM 11548.</title>
        <authorList>
            <consortium name="US DOE Joint Genome Institute"/>
            <person name="Copeland A."/>
            <person name="Lucas S."/>
            <person name="Lapidus A."/>
            <person name="Barry K."/>
            <person name="Glavina del Rio T."/>
            <person name="Dalin E."/>
            <person name="Tice H."/>
            <person name="Pitluck S."/>
            <person name="Chain P."/>
            <person name="Malfatti S."/>
            <person name="Shin M."/>
            <person name="Vergez L."/>
            <person name="Schmutz J."/>
            <person name="Larimer F."/>
            <person name="Land M."/>
            <person name="Hauser L."/>
            <person name="Kyrpides N."/>
            <person name="Mikhailova N."/>
            <person name="Cozen A.E."/>
            <person name="Fitz-Gibbon S.T."/>
            <person name="House C.H."/>
            <person name="Saltikov C."/>
            <person name="Lowe T.M."/>
            <person name="Richardson P."/>
        </authorList>
    </citation>
    <scope>NUCLEOTIDE SEQUENCE [LARGE SCALE GENOMIC DNA]</scope>
    <source>
        <strain>DSM 21063 / JCM 11548 / VA1</strain>
    </source>
</reference>
<protein>
    <recommendedName>
        <fullName evidence="1">Imidazoleglycerol-phosphate dehydratase</fullName>
        <shortName evidence="1">IGPD</shortName>
        <ecNumber evidence="1">4.2.1.19</ecNumber>
    </recommendedName>
</protein>
<dbReference type="EC" id="4.2.1.19" evidence="1"/>
<dbReference type="EMBL" id="CP000561">
    <property type="protein sequence ID" value="ABO07577.1"/>
    <property type="molecule type" value="Genomic_DNA"/>
</dbReference>
<dbReference type="RefSeq" id="WP_011848834.1">
    <property type="nucleotide sequence ID" value="NC_009073.1"/>
</dbReference>
<dbReference type="SMR" id="A3MSG0"/>
<dbReference type="STRING" id="410359.Pcal_0139"/>
<dbReference type="GeneID" id="4909078"/>
<dbReference type="KEGG" id="pcl:Pcal_0139"/>
<dbReference type="eggNOG" id="arCOG04398">
    <property type="taxonomic scope" value="Archaea"/>
</dbReference>
<dbReference type="HOGENOM" id="CLU_044308_2_0_2"/>
<dbReference type="OrthoDB" id="103579at2157"/>
<dbReference type="UniPathway" id="UPA00031">
    <property type="reaction ID" value="UER00011"/>
</dbReference>
<dbReference type="Proteomes" id="UP000001431">
    <property type="component" value="Chromosome"/>
</dbReference>
<dbReference type="GO" id="GO:0005737">
    <property type="term" value="C:cytoplasm"/>
    <property type="evidence" value="ECO:0007669"/>
    <property type="project" value="UniProtKB-SubCell"/>
</dbReference>
<dbReference type="GO" id="GO:0004424">
    <property type="term" value="F:imidazoleglycerol-phosphate dehydratase activity"/>
    <property type="evidence" value="ECO:0007669"/>
    <property type="project" value="UniProtKB-UniRule"/>
</dbReference>
<dbReference type="GO" id="GO:0000105">
    <property type="term" value="P:L-histidine biosynthetic process"/>
    <property type="evidence" value="ECO:0007669"/>
    <property type="project" value="UniProtKB-UniRule"/>
</dbReference>
<dbReference type="FunFam" id="3.30.230.40:FF:000001">
    <property type="entry name" value="Imidazoleglycerol-phosphate dehydratase HisB"/>
    <property type="match status" value="1"/>
</dbReference>
<dbReference type="FunFam" id="3.30.230.40:FF:000003">
    <property type="entry name" value="Imidazoleglycerol-phosphate dehydratase HisB"/>
    <property type="match status" value="1"/>
</dbReference>
<dbReference type="Gene3D" id="3.30.230.40">
    <property type="entry name" value="Imidazole glycerol phosphate dehydratase, domain 1"/>
    <property type="match status" value="2"/>
</dbReference>
<dbReference type="HAMAP" id="MF_00076">
    <property type="entry name" value="HisB"/>
    <property type="match status" value="1"/>
</dbReference>
<dbReference type="InterPro" id="IPR038494">
    <property type="entry name" value="IGPD_sf"/>
</dbReference>
<dbReference type="InterPro" id="IPR000807">
    <property type="entry name" value="ImidazoleglycerolP_deHydtase"/>
</dbReference>
<dbReference type="InterPro" id="IPR020565">
    <property type="entry name" value="ImidazoleglycerP_deHydtase_CS"/>
</dbReference>
<dbReference type="InterPro" id="IPR020568">
    <property type="entry name" value="Ribosomal_Su5_D2-typ_SF"/>
</dbReference>
<dbReference type="PANTHER" id="PTHR23133:SF2">
    <property type="entry name" value="IMIDAZOLEGLYCEROL-PHOSPHATE DEHYDRATASE"/>
    <property type="match status" value="1"/>
</dbReference>
<dbReference type="PANTHER" id="PTHR23133">
    <property type="entry name" value="IMIDAZOLEGLYCEROL-PHOSPHATE DEHYDRATASE HIS7"/>
    <property type="match status" value="1"/>
</dbReference>
<dbReference type="Pfam" id="PF00475">
    <property type="entry name" value="IGPD"/>
    <property type="match status" value="1"/>
</dbReference>
<dbReference type="SUPFAM" id="SSF54211">
    <property type="entry name" value="Ribosomal protein S5 domain 2-like"/>
    <property type="match status" value="2"/>
</dbReference>
<dbReference type="PROSITE" id="PS00955">
    <property type="entry name" value="IGP_DEHYDRATASE_2"/>
    <property type="match status" value="1"/>
</dbReference>